<reference key="1">
    <citation type="journal article" date="2004" name="Plant Physiol.">
        <title>Relationship between the heat tolerance of photosynthesis and the thermal stability of rubisco activase in plants from contrasting thermal environments.</title>
        <authorList>
            <person name="Salvucci M.E."/>
            <person name="Crafts-Brandner S.J."/>
        </authorList>
    </citation>
    <scope>NUCLEOTIDE SEQUENCE [MRNA]</scope>
</reference>
<comment type="function">
    <text evidence="1">Activation of RuBisCO (ribulose-1,5-bisphosphate carboxylase/oxygenase; EC 4.1.1.39) involves the ATP-dependent carboxylation of the epsilon-amino group of lysine leading to a carbamate structure.</text>
</comment>
<comment type="subcellular location">
    <subcellularLocation>
        <location evidence="1">Plastid</location>
        <location evidence="1">Chloroplast stroma</location>
    </subcellularLocation>
</comment>
<comment type="similarity">
    <text evidence="3">Belongs to the RuBisCO activase family.</text>
</comment>
<gene>
    <name type="primary">RCA1</name>
</gene>
<protein>
    <recommendedName>
        <fullName>Ribulose bisphosphate carboxylase/oxygenase activase 1, chloroplastic</fullName>
        <shortName>RA 1</shortName>
        <shortName>RuBisCO activase 1</shortName>
    </recommendedName>
    <alternativeName>
        <fullName>RuBisCO activase alpha form</fullName>
    </alternativeName>
</protein>
<sequence>MAAAYSTVGAVNRAPLSLNGSGARASLVPSTAFFGSSLKKSAAKFPKASSGNFKIVAQEISEDQQTDKDKWKGLAYDISDDQQDITRGKGMVDTLFQAPMQSGTHYAVMSSYDYISQGLRQYNLDNNMDGFYIAPAFMDKLVVHITKNFLSLPNIKIPLILGIWGGKGQGKSFQCELVFAKMGINPIMMSAGELESGNAGEPAKLIRQRYREAADIIKKGKMCCLFINDLDAGAGRMGGTTQYTVNNQMVNATLMNIADNPTNVQLPGMYNKEENPRVPIIVTGNDFSTLYAPLIRDGRMEKFYWAPTREDRIGVCKGIFRTDNVADDDIVKLVDTFPGQSIDFFGALRARVYHDEVRKWVSEVGVDTIGKKLVNSKEGPPSFEQPKMTIDKLLGYGGMLVQEQENVKRVQLADKYMSEAALGDANNDAIKRGTFYGGQAAQQVGNVPVPEGCTDPQATNYDPTARSDDGSCVYKF</sequence>
<proteinExistence type="evidence at protein level"/>
<keyword id="KW-0002">3D-structure</keyword>
<keyword id="KW-0067">ATP-binding</keyword>
<keyword id="KW-0150">Chloroplast</keyword>
<keyword id="KW-0547">Nucleotide-binding</keyword>
<keyword id="KW-0934">Plastid</keyword>
<keyword id="KW-0809">Transit peptide</keyword>
<evidence type="ECO:0000250" key="1"/>
<evidence type="ECO:0000255" key="2"/>
<evidence type="ECO:0000305" key="3"/>
<evidence type="ECO:0007829" key="4">
    <source>
        <dbReference type="PDB" id="3THG"/>
    </source>
</evidence>
<feature type="transit peptide" description="Chloroplast" evidence="2">
    <location>
        <begin position="1"/>
        <end position="56"/>
    </location>
</feature>
<feature type="chain" id="PRO_0000030233" description="Ribulose bisphosphate carboxylase/oxygenase activase 1, chloroplastic">
    <location>
        <begin position="57"/>
        <end position="476"/>
    </location>
</feature>
<feature type="binding site" evidence="2">
    <location>
        <begin position="165"/>
        <end position="172"/>
    </location>
    <ligand>
        <name>ATP</name>
        <dbReference type="ChEBI" id="CHEBI:30616"/>
    </ligand>
</feature>
<feature type="helix" evidence="4">
    <location>
        <begin position="309"/>
        <end position="319"/>
    </location>
</feature>
<feature type="turn" evidence="4">
    <location>
        <begin position="320"/>
        <end position="324"/>
    </location>
</feature>
<feature type="helix" evidence="4">
    <location>
        <begin position="327"/>
        <end position="336"/>
    </location>
</feature>
<feature type="helix" evidence="4">
    <location>
        <begin position="342"/>
        <end position="373"/>
    </location>
</feature>
<feature type="helix" evidence="4">
    <location>
        <begin position="390"/>
        <end position="401"/>
    </location>
</feature>
<dbReference type="EMBL" id="AY312575">
    <property type="protein sequence ID" value="AAP83929.1"/>
    <property type="molecule type" value="mRNA"/>
</dbReference>
<dbReference type="PDB" id="3THG">
    <property type="method" value="X-ray"/>
    <property type="resolution" value="1.88 A"/>
    <property type="chains" value="A=308-409"/>
</dbReference>
<dbReference type="PDBsum" id="3THG"/>
<dbReference type="SMR" id="Q7X9A0"/>
<dbReference type="EvolutionaryTrace" id="Q7X9A0"/>
<dbReference type="GO" id="GO:0009570">
    <property type="term" value="C:chloroplast stroma"/>
    <property type="evidence" value="ECO:0007669"/>
    <property type="project" value="UniProtKB-SubCell"/>
</dbReference>
<dbReference type="GO" id="GO:0009579">
    <property type="term" value="C:thylakoid"/>
    <property type="evidence" value="ECO:0007669"/>
    <property type="project" value="TreeGrafter"/>
</dbReference>
<dbReference type="GO" id="GO:0005524">
    <property type="term" value="F:ATP binding"/>
    <property type="evidence" value="ECO:0007669"/>
    <property type="project" value="UniProtKB-KW"/>
</dbReference>
<dbReference type="GO" id="GO:0016887">
    <property type="term" value="F:ATP hydrolysis activity"/>
    <property type="evidence" value="ECO:0007669"/>
    <property type="project" value="InterPro"/>
</dbReference>
<dbReference type="GO" id="GO:0046863">
    <property type="term" value="F:ribulose-1,5-bisphosphate carboxylase/oxygenase activator activity"/>
    <property type="evidence" value="ECO:0007669"/>
    <property type="project" value="TreeGrafter"/>
</dbReference>
<dbReference type="FunFam" id="1.10.8.1070:FF:000001">
    <property type="entry name" value="Ribulose bisphosphate carboxylase/oxygenase activase, chloroplastic"/>
    <property type="match status" value="1"/>
</dbReference>
<dbReference type="FunFam" id="3.40.50.300:FF:000258">
    <property type="entry name" value="Ribulose bisphosphate carboxylase/oxygenase activase, chloroplastic"/>
    <property type="match status" value="1"/>
</dbReference>
<dbReference type="Gene3D" id="1.10.8.1070">
    <property type="match status" value="1"/>
</dbReference>
<dbReference type="Gene3D" id="3.40.50.300">
    <property type="entry name" value="P-loop containing nucleotide triphosphate hydrolases"/>
    <property type="match status" value="1"/>
</dbReference>
<dbReference type="InterPro" id="IPR003959">
    <property type="entry name" value="ATPase_AAA_core"/>
</dbReference>
<dbReference type="InterPro" id="IPR027417">
    <property type="entry name" value="P-loop_NTPase"/>
</dbReference>
<dbReference type="InterPro" id="IPR044960">
    <property type="entry name" value="RCA-like"/>
</dbReference>
<dbReference type="InterPro" id="IPR048571">
    <property type="entry name" value="RuBisCO_activase_AAA_helical"/>
</dbReference>
<dbReference type="PANTHER" id="PTHR32429">
    <property type="match status" value="1"/>
</dbReference>
<dbReference type="PANTHER" id="PTHR32429:SF43">
    <property type="entry name" value="RIBULOSE BISPHOSPHATE CARBOXYLASE_OXYGENASE ACTIVASE, CHLOROPLASTIC"/>
    <property type="match status" value="1"/>
</dbReference>
<dbReference type="Pfam" id="PF00004">
    <property type="entry name" value="AAA"/>
    <property type="match status" value="1"/>
</dbReference>
<dbReference type="Pfam" id="PF21228">
    <property type="entry name" value="RuBisCO_activase_AAA_helical"/>
    <property type="match status" value="1"/>
</dbReference>
<dbReference type="SUPFAM" id="SSF52540">
    <property type="entry name" value="P-loop containing nucleoside triphosphate hydrolases"/>
    <property type="match status" value="1"/>
</dbReference>
<name>RCA1_LARTR</name>
<accession>Q7X9A0</accession>
<organism>
    <name type="scientific">Larrea tridentata</name>
    <name type="common">Creosote bush</name>
    <name type="synonym">Zygophyllum tridentatum</name>
    <dbReference type="NCBI Taxonomy" id="66636"/>
    <lineage>
        <taxon>Eukaryota</taxon>
        <taxon>Viridiplantae</taxon>
        <taxon>Streptophyta</taxon>
        <taxon>Embryophyta</taxon>
        <taxon>Tracheophyta</taxon>
        <taxon>Spermatophyta</taxon>
        <taxon>Magnoliopsida</taxon>
        <taxon>eudicotyledons</taxon>
        <taxon>Gunneridae</taxon>
        <taxon>Pentapetalae</taxon>
        <taxon>rosids</taxon>
        <taxon>fabids</taxon>
        <taxon>Zygophyllales</taxon>
        <taxon>Zygophyllaceae</taxon>
        <taxon>Larreoideae</taxon>
        <taxon>Larrea</taxon>
    </lineage>
</organism>